<keyword id="KW-0687">Ribonucleoprotein</keyword>
<keyword id="KW-0689">Ribosomal protein</keyword>
<keyword id="KW-0694">RNA-binding</keyword>
<keyword id="KW-0699">rRNA-binding</keyword>
<accession>Q01W94</accession>
<proteinExistence type="inferred from homology"/>
<name>RL23_SOLUE</name>
<reference key="1">
    <citation type="journal article" date="2009" name="Appl. Environ. Microbiol.">
        <title>Three genomes from the phylum Acidobacteria provide insight into the lifestyles of these microorganisms in soils.</title>
        <authorList>
            <person name="Ward N.L."/>
            <person name="Challacombe J.F."/>
            <person name="Janssen P.H."/>
            <person name="Henrissat B."/>
            <person name="Coutinho P.M."/>
            <person name="Wu M."/>
            <person name="Xie G."/>
            <person name="Haft D.H."/>
            <person name="Sait M."/>
            <person name="Badger J."/>
            <person name="Barabote R.D."/>
            <person name="Bradley B."/>
            <person name="Brettin T.S."/>
            <person name="Brinkac L.M."/>
            <person name="Bruce D."/>
            <person name="Creasy T."/>
            <person name="Daugherty S.C."/>
            <person name="Davidsen T.M."/>
            <person name="DeBoy R.T."/>
            <person name="Detter J.C."/>
            <person name="Dodson R.J."/>
            <person name="Durkin A.S."/>
            <person name="Ganapathy A."/>
            <person name="Gwinn-Giglio M."/>
            <person name="Han C.S."/>
            <person name="Khouri H."/>
            <person name="Kiss H."/>
            <person name="Kothari S.P."/>
            <person name="Madupu R."/>
            <person name="Nelson K.E."/>
            <person name="Nelson W.C."/>
            <person name="Paulsen I."/>
            <person name="Penn K."/>
            <person name="Ren Q."/>
            <person name="Rosovitz M.J."/>
            <person name="Selengut J.D."/>
            <person name="Shrivastava S."/>
            <person name="Sullivan S.A."/>
            <person name="Tapia R."/>
            <person name="Thompson L.S."/>
            <person name="Watkins K.L."/>
            <person name="Yang Q."/>
            <person name="Yu C."/>
            <person name="Zafar N."/>
            <person name="Zhou L."/>
            <person name="Kuske C.R."/>
        </authorList>
    </citation>
    <scope>NUCLEOTIDE SEQUENCE [LARGE SCALE GENOMIC DNA]</scope>
    <source>
        <strain>Ellin6076</strain>
    </source>
</reference>
<dbReference type="EMBL" id="CP000473">
    <property type="protein sequence ID" value="ABJ86071.1"/>
    <property type="molecule type" value="Genomic_DNA"/>
</dbReference>
<dbReference type="SMR" id="Q01W94"/>
<dbReference type="FunCoup" id="Q01W94">
    <property type="interactions" value="559"/>
</dbReference>
<dbReference type="STRING" id="234267.Acid_5116"/>
<dbReference type="KEGG" id="sus:Acid_5116"/>
<dbReference type="eggNOG" id="COG0089">
    <property type="taxonomic scope" value="Bacteria"/>
</dbReference>
<dbReference type="HOGENOM" id="CLU_037562_3_1_0"/>
<dbReference type="InParanoid" id="Q01W94"/>
<dbReference type="OrthoDB" id="9793353at2"/>
<dbReference type="GO" id="GO:1990904">
    <property type="term" value="C:ribonucleoprotein complex"/>
    <property type="evidence" value="ECO:0007669"/>
    <property type="project" value="UniProtKB-KW"/>
</dbReference>
<dbReference type="GO" id="GO:0005840">
    <property type="term" value="C:ribosome"/>
    <property type="evidence" value="ECO:0007669"/>
    <property type="project" value="UniProtKB-KW"/>
</dbReference>
<dbReference type="GO" id="GO:0019843">
    <property type="term" value="F:rRNA binding"/>
    <property type="evidence" value="ECO:0007669"/>
    <property type="project" value="UniProtKB-UniRule"/>
</dbReference>
<dbReference type="GO" id="GO:0003735">
    <property type="term" value="F:structural constituent of ribosome"/>
    <property type="evidence" value="ECO:0007669"/>
    <property type="project" value="InterPro"/>
</dbReference>
<dbReference type="GO" id="GO:0006412">
    <property type="term" value="P:translation"/>
    <property type="evidence" value="ECO:0007669"/>
    <property type="project" value="UniProtKB-UniRule"/>
</dbReference>
<dbReference type="FunFam" id="3.30.70.330:FF:000001">
    <property type="entry name" value="50S ribosomal protein L23"/>
    <property type="match status" value="1"/>
</dbReference>
<dbReference type="Gene3D" id="3.30.70.330">
    <property type="match status" value="1"/>
</dbReference>
<dbReference type="HAMAP" id="MF_01369_B">
    <property type="entry name" value="Ribosomal_uL23_B"/>
    <property type="match status" value="1"/>
</dbReference>
<dbReference type="InterPro" id="IPR012677">
    <property type="entry name" value="Nucleotide-bd_a/b_plait_sf"/>
</dbReference>
<dbReference type="InterPro" id="IPR013025">
    <property type="entry name" value="Ribosomal_uL23-like"/>
</dbReference>
<dbReference type="InterPro" id="IPR012678">
    <property type="entry name" value="Ribosomal_uL23/eL15/eS24_sf"/>
</dbReference>
<dbReference type="InterPro" id="IPR001014">
    <property type="entry name" value="Ribosomal_uL23_CS"/>
</dbReference>
<dbReference type="NCBIfam" id="NF004359">
    <property type="entry name" value="PRK05738.1-3"/>
    <property type="match status" value="1"/>
</dbReference>
<dbReference type="NCBIfam" id="NF004363">
    <property type="entry name" value="PRK05738.2-4"/>
    <property type="match status" value="1"/>
</dbReference>
<dbReference type="NCBIfam" id="NF004366">
    <property type="entry name" value="PRK05738.3-2"/>
    <property type="match status" value="1"/>
</dbReference>
<dbReference type="PANTHER" id="PTHR11620">
    <property type="entry name" value="60S RIBOSOMAL PROTEIN L23A"/>
    <property type="match status" value="1"/>
</dbReference>
<dbReference type="Pfam" id="PF00276">
    <property type="entry name" value="Ribosomal_L23"/>
    <property type="match status" value="1"/>
</dbReference>
<dbReference type="SUPFAM" id="SSF54189">
    <property type="entry name" value="Ribosomal proteins S24e, L23 and L15e"/>
    <property type="match status" value="1"/>
</dbReference>
<dbReference type="PROSITE" id="PS00050">
    <property type="entry name" value="RIBOSOMAL_L23"/>
    <property type="match status" value="1"/>
</dbReference>
<gene>
    <name evidence="1" type="primary">rplW</name>
    <name type="ordered locus">Acid_5116</name>
</gene>
<evidence type="ECO:0000255" key="1">
    <source>
        <dbReference type="HAMAP-Rule" id="MF_01369"/>
    </source>
</evidence>
<evidence type="ECO:0000305" key="2"/>
<comment type="function">
    <text evidence="1">One of the early assembly proteins it binds 23S rRNA. One of the proteins that surrounds the polypeptide exit tunnel on the outside of the ribosome. Forms the main docking site for trigger factor binding to the ribosome.</text>
</comment>
<comment type="subunit">
    <text evidence="1">Part of the 50S ribosomal subunit. Contacts protein L29, and trigger factor when it is bound to the ribosome.</text>
</comment>
<comment type="similarity">
    <text evidence="1">Belongs to the universal ribosomal protein uL23 family.</text>
</comment>
<protein>
    <recommendedName>
        <fullName evidence="1">Large ribosomal subunit protein uL23</fullName>
    </recommendedName>
    <alternativeName>
        <fullName evidence="2">50S ribosomal protein L23</fullName>
    </alternativeName>
</protein>
<sequence length="95" mass="11003">MNLYDVIRRPLVTEKGVMKKDTERTLCFEVSADANKTQVKSAVEKLFKVKVDEVRTATFEGKLRRRGRFSGYRSDWKKAYVKLKAGEKVPDFAEI</sequence>
<feature type="chain" id="PRO_1000068158" description="Large ribosomal subunit protein uL23">
    <location>
        <begin position="1"/>
        <end position="95"/>
    </location>
</feature>
<organism>
    <name type="scientific">Solibacter usitatus (strain Ellin6076)</name>
    <dbReference type="NCBI Taxonomy" id="234267"/>
    <lineage>
        <taxon>Bacteria</taxon>
        <taxon>Pseudomonadati</taxon>
        <taxon>Acidobacteriota</taxon>
        <taxon>Terriglobia</taxon>
        <taxon>Bryobacterales</taxon>
        <taxon>Solibacteraceae</taxon>
        <taxon>Candidatus Solibacter</taxon>
    </lineage>
</organism>